<reference key="1">
    <citation type="submission" date="2005-08" db="EMBL/GenBank/DDBJ databases">
        <title>Complete sequence of chromosome 1 of Nitrosospira multiformis ATCC 25196.</title>
        <authorList>
            <person name="Copeland A."/>
            <person name="Lucas S."/>
            <person name="Lapidus A."/>
            <person name="Barry K."/>
            <person name="Detter J.C."/>
            <person name="Glavina T."/>
            <person name="Hammon N."/>
            <person name="Israni S."/>
            <person name="Pitluck S."/>
            <person name="Chain P."/>
            <person name="Malfatti S."/>
            <person name="Shin M."/>
            <person name="Vergez L."/>
            <person name="Schmutz J."/>
            <person name="Larimer F."/>
            <person name="Land M."/>
            <person name="Hauser L."/>
            <person name="Kyrpides N."/>
            <person name="Lykidis A."/>
            <person name="Richardson P."/>
        </authorList>
    </citation>
    <scope>NUCLEOTIDE SEQUENCE [LARGE SCALE GENOMIC DNA]</scope>
    <source>
        <strain>ATCC 25196 / NCIMB 11849 / C 71</strain>
    </source>
</reference>
<sequence length="191" mass="21304">MDSNDSEFGIGDWQRLLRSLGEDPSRQGLRETPERVTRAWAHWTRGYKQDPAAILKTFADGGESYDELIVVRQIPVYSHCEHHLAPFFGHATIGYLPTGHIVGLSKLTRLVNCFAARLQVQERLTQQVAQSLLEHLQPKAVGVILRCRHMCMESRGIAVAGEETVTSAMLGDLKTNAAQRAEFLALAESHE</sequence>
<feature type="chain" id="PRO_1000043713" description="GTP cyclohydrolase 1">
    <location>
        <begin position="1"/>
        <end position="191"/>
    </location>
</feature>
<feature type="binding site" evidence="2">
    <location>
        <position position="80"/>
    </location>
    <ligand>
        <name>Zn(2+)</name>
        <dbReference type="ChEBI" id="CHEBI:29105"/>
    </ligand>
</feature>
<feature type="binding site" evidence="2">
    <location>
        <position position="83"/>
    </location>
    <ligand>
        <name>Zn(2+)</name>
        <dbReference type="ChEBI" id="CHEBI:29105"/>
    </ligand>
</feature>
<feature type="binding site" evidence="2">
    <location>
        <position position="151"/>
    </location>
    <ligand>
        <name>Zn(2+)</name>
        <dbReference type="ChEBI" id="CHEBI:29105"/>
    </ligand>
</feature>
<evidence type="ECO:0000250" key="1"/>
<evidence type="ECO:0000255" key="2">
    <source>
        <dbReference type="HAMAP-Rule" id="MF_00223"/>
    </source>
</evidence>
<comment type="catalytic activity">
    <reaction evidence="2">
        <text>GTP + H2O = 7,8-dihydroneopterin 3'-triphosphate + formate + H(+)</text>
        <dbReference type="Rhea" id="RHEA:17473"/>
        <dbReference type="ChEBI" id="CHEBI:15377"/>
        <dbReference type="ChEBI" id="CHEBI:15378"/>
        <dbReference type="ChEBI" id="CHEBI:15740"/>
        <dbReference type="ChEBI" id="CHEBI:37565"/>
        <dbReference type="ChEBI" id="CHEBI:58462"/>
        <dbReference type="EC" id="3.5.4.16"/>
    </reaction>
</comment>
<comment type="pathway">
    <text evidence="2">Cofactor biosynthesis; 7,8-dihydroneopterin triphosphate biosynthesis; 7,8-dihydroneopterin triphosphate from GTP: step 1/1.</text>
</comment>
<comment type="subunit">
    <text evidence="1">Toroid-shaped homodecamer, composed of two pentamers of five dimers.</text>
</comment>
<comment type="similarity">
    <text evidence="2">Belongs to the GTP cyclohydrolase I family.</text>
</comment>
<protein>
    <recommendedName>
        <fullName evidence="2">GTP cyclohydrolase 1</fullName>
        <ecNumber evidence="2">3.5.4.16</ecNumber>
    </recommendedName>
    <alternativeName>
        <fullName evidence="2">GTP cyclohydrolase I</fullName>
        <shortName evidence="2">GTP-CH-I</shortName>
    </alternativeName>
</protein>
<organism>
    <name type="scientific">Nitrosospira multiformis (strain ATCC 25196 / NCIMB 11849 / C 71)</name>
    <dbReference type="NCBI Taxonomy" id="323848"/>
    <lineage>
        <taxon>Bacteria</taxon>
        <taxon>Pseudomonadati</taxon>
        <taxon>Pseudomonadota</taxon>
        <taxon>Betaproteobacteria</taxon>
        <taxon>Nitrosomonadales</taxon>
        <taxon>Nitrosomonadaceae</taxon>
        <taxon>Nitrosospira</taxon>
    </lineage>
</organism>
<accession>Q2Y6B3</accession>
<dbReference type="EC" id="3.5.4.16" evidence="2"/>
<dbReference type="EMBL" id="CP000103">
    <property type="protein sequence ID" value="ABB75708.1"/>
    <property type="molecule type" value="Genomic_DNA"/>
</dbReference>
<dbReference type="RefSeq" id="WP_011381709.1">
    <property type="nucleotide sequence ID" value="NC_007614.1"/>
</dbReference>
<dbReference type="SMR" id="Q2Y6B3"/>
<dbReference type="STRING" id="323848.Nmul_A2419"/>
<dbReference type="KEGG" id="nmu:Nmul_A2419"/>
<dbReference type="eggNOG" id="COG0302">
    <property type="taxonomic scope" value="Bacteria"/>
</dbReference>
<dbReference type="HOGENOM" id="CLU_049768_3_1_4"/>
<dbReference type="OrthoDB" id="9801207at2"/>
<dbReference type="UniPathway" id="UPA00848">
    <property type="reaction ID" value="UER00151"/>
</dbReference>
<dbReference type="Proteomes" id="UP000002718">
    <property type="component" value="Chromosome"/>
</dbReference>
<dbReference type="GO" id="GO:0005737">
    <property type="term" value="C:cytoplasm"/>
    <property type="evidence" value="ECO:0007669"/>
    <property type="project" value="TreeGrafter"/>
</dbReference>
<dbReference type="GO" id="GO:0005525">
    <property type="term" value="F:GTP binding"/>
    <property type="evidence" value="ECO:0007669"/>
    <property type="project" value="UniProtKB-KW"/>
</dbReference>
<dbReference type="GO" id="GO:0003934">
    <property type="term" value="F:GTP cyclohydrolase I activity"/>
    <property type="evidence" value="ECO:0007669"/>
    <property type="project" value="UniProtKB-UniRule"/>
</dbReference>
<dbReference type="GO" id="GO:0008270">
    <property type="term" value="F:zinc ion binding"/>
    <property type="evidence" value="ECO:0007669"/>
    <property type="project" value="UniProtKB-UniRule"/>
</dbReference>
<dbReference type="GO" id="GO:0006730">
    <property type="term" value="P:one-carbon metabolic process"/>
    <property type="evidence" value="ECO:0007669"/>
    <property type="project" value="UniProtKB-UniRule"/>
</dbReference>
<dbReference type="GO" id="GO:0006729">
    <property type="term" value="P:tetrahydrobiopterin biosynthetic process"/>
    <property type="evidence" value="ECO:0007669"/>
    <property type="project" value="TreeGrafter"/>
</dbReference>
<dbReference type="GO" id="GO:0046654">
    <property type="term" value="P:tetrahydrofolate biosynthetic process"/>
    <property type="evidence" value="ECO:0007669"/>
    <property type="project" value="UniProtKB-UniRule"/>
</dbReference>
<dbReference type="FunFam" id="3.30.1130.10:FF:000001">
    <property type="entry name" value="GTP cyclohydrolase 1"/>
    <property type="match status" value="1"/>
</dbReference>
<dbReference type="Gene3D" id="1.10.286.10">
    <property type="match status" value="1"/>
</dbReference>
<dbReference type="Gene3D" id="3.30.1130.10">
    <property type="match status" value="1"/>
</dbReference>
<dbReference type="HAMAP" id="MF_00223">
    <property type="entry name" value="FolE"/>
    <property type="match status" value="1"/>
</dbReference>
<dbReference type="InterPro" id="IPR043133">
    <property type="entry name" value="GTP-CH-I_C/QueF"/>
</dbReference>
<dbReference type="InterPro" id="IPR043134">
    <property type="entry name" value="GTP-CH-I_N"/>
</dbReference>
<dbReference type="InterPro" id="IPR001474">
    <property type="entry name" value="GTP_CycHdrlase_I"/>
</dbReference>
<dbReference type="InterPro" id="IPR018234">
    <property type="entry name" value="GTP_CycHdrlase_I_CS"/>
</dbReference>
<dbReference type="InterPro" id="IPR020602">
    <property type="entry name" value="GTP_CycHdrlase_I_dom"/>
</dbReference>
<dbReference type="NCBIfam" id="TIGR00063">
    <property type="entry name" value="folE"/>
    <property type="match status" value="1"/>
</dbReference>
<dbReference type="NCBIfam" id="NF006825">
    <property type="entry name" value="PRK09347.1-2"/>
    <property type="match status" value="1"/>
</dbReference>
<dbReference type="NCBIfam" id="NF006826">
    <property type="entry name" value="PRK09347.1-3"/>
    <property type="match status" value="1"/>
</dbReference>
<dbReference type="PANTHER" id="PTHR11109:SF7">
    <property type="entry name" value="GTP CYCLOHYDROLASE 1"/>
    <property type="match status" value="1"/>
</dbReference>
<dbReference type="PANTHER" id="PTHR11109">
    <property type="entry name" value="GTP CYCLOHYDROLASE I"/>
    <property type="match status" value="1"/>
</dbReference>
<dbReference type="Pfam" id="PF01227">
    <property type="entry name" value="GTP_cyclohydroI"/>
    <property type="match status" value="1"/>
</dbReference>
<dbReference type="SUPFAM" id="SSF55620">
    <property type="entry name" value="Tetrahydrobiopterin biosynthesis enzymes-like"/>
    <property type="match status" value="1"/>
</dbReference>
<dbReference type="PROSITE" id="PS00860">
    <property type="entry name" value="GTP_CYCLOHYDROL_1_2"/>
    <property type="match status" value="1"/>
</dbReference>
<proteinExistence type="inferred from homology"/>
<gene>
    <name evidence="2" type="primary">folE</name>
    <name type="ordered locus">Nmul_A2419</name>
</gene>
<keyword id="KW-0342">GTP-binding</keyword>
<keyword id="KW-0378">Hydrolase</keyword>
<keyword id="KW-0479">Metal-binding</keyword>
<keyword id="KW-0547">Nucleotide-binding</keyword>
<keyword id="KW-0554">One-carbon metabolism</keyword>
<keyword id="KW-1185">Reference proteome</keyword>
<keyword id="KW-0862">Zinc</keyword>
<name>GCH1_NITMU</name>